<gene>
    <name evidence="1" type="primary">eIF3a</name>
    <name evidence="1" type="synonym">eIF3-S10</name>
    <name type="ORF">GH11742</name>
</gene>
<name>EIF3A_DROGR</name>
<dbReference type="EMBL" id="CH918512">
    <property type="protein sequence ID" value="EDW04308.1"/>
    <property type="molecule type" value="Genomic_DNA"/>
</dbReference>
<dbReference type="RefSeq" id="XP_001997354.1">
    <property type="nucleotide sequence ID" value="XM_001997318.1"/>
</dbReference>
<dbReference type="SMR" id="B4K250"/>
<dbReference type="FunCoup" id="B4K250">
    <property type="interactions" value="2514"/>
</dbReference>
<dbReference type="STRING" id="7222.B4K250"/>
<dbReference type="EnsemblMetazoa" id="FBtr0465701">
    <property type="protein sequence ID" value="FBpp0415937"/>
    <property type="gene ID" value="FBgn0119222"/>
</dbReference>
<dbReference type="EnsemblMetazoa" id="XM_043215212.1">
    <property type="protein sequence ID" value="XP_043071147.1"/>
    <property type="gene ID" value="LOC6571148"/>
</dbReference>
<dbReference type="eggNOG" id="KOG2072">
    <property type="taxonomic scope" value="Eukaryota"/>
</dbReference>
<dbReference type="HOGENOM" id="CLU_002096_2_1_1"/>
<dbReference type="InParanoid" id="B4K250"/>
<dbReference type="OMA" id="DHMKNVV"/>
<dbReference type="OrthoDB" id="18884at2759"/>
<dbReference type="PhylomeDB" id="B4K250"/>
<dbReference type="ChiTaRS" id="eIF3-S10">
    <property type="organism name" value="fly"/>
</dbReference>
<dbReference type="Proteomes" id="UP000001070">
    <property type="component" value="Unassembled WGS sequence"/>
</dbReference>
<dbReference type="GO" id="GO:0016282">
    <property type="term" value="C:eukaryotic 43S preinitiation complex"/>
    <property type="evidence" value="ECO:0007669"/>
    <property type="project" value="UniProtKB-UniRule"/>
</dbReference>
<dbReference type="GO" id="GO:0033290">
    <property type="term" value="C:eukaryotic 48S preinitiation complex"/>
    <property type="evidence" value="ECO:0007669"/>
    <property type="project" value="UniProtKB-UniRule"/>
</dbReference>
<dbReference type="GO" id="GO:0005852">
    <property type="term" value="C:eukaryotic translation initiation factor 3 complex"/>
    <property type="evidence" value="ECO:0000250"/>
    <property type="project" value="UniProtKB"/>
</dbReference>
<dbReference type="GO" id="GO:0071540">
    <property type="term" value="C:eukaryotic translation initiation factor 3 complex, eIF3e"/>
    <property type="evidence" value="ECO:0007669"/>
    <property type="project" value="TreeGrafter"/>
</dbReference>
<dbReference type="GO" id="GO:0071541">
    <property type="term" value="C:eukaryotic translation initiation factor 3 complex, eIF3m"/>
    <property type="evidence" value="ECO:0007669"/>
    <property type="project" value="TreeGrafter"/>
</dbReference>
<dbReference type="GO" id="GO:0043614">
    <property type="term" value="C:multi-eIF complex"/>
    <property type="evidence" value="ECO:0007669"/>
    <property type="project" value="TreeGrafter"/>
</dbReference>
<dbReference type="GO" id="GO:0003729">
    <property type="term" value="F:mRNA binding"/>
    <property type="evidence" value="ECO:0007669"/>
    <property type="project" value="TreeGrafter"/>
</dbReference>
<dbReference type="GO" id="GO:0003743">
    <property type="term" value="F:translation initiation factor activity"/>
    <property type="evidence" value="ECO:0000250"/>
    <property type="project" value="UniProtKB"/>
</dbReference>
<dbReference type="GO" id="GO:0001732">
    <property type="term" value="P:formation of cytoplasmic translation initiation complex"/>
    <property type="evidence" value="ECO:0007669"/>
    <property type="project" value="UniProtKB-UniRule"/>
</dbReference>
<dbReference type="GO" id="GO:0006446">
    <property type="term" value="P:regulation of translational initiation"/>
    <property type="evidence" value="ECO:0000250"/>
    <property type="project" value="UniProtKB"/>
</dbReference>
<dbReference type="GO" id="GO:0002188">
    <property type="term" value="P:translation reinitiation"/>
    <property type="evidence" value="ECO:0007669"/>
    <property type="project" value="TreeGrafter"/>
</dbReference>
<dbReference type="FunFam" id="1.25.40.860:FF:000007">
    <property type="entry name" value="Eukaryotic translation initiation factor 3 subunit A"/>
    <property type="match status" value="1"/>
</dbReference>
<dbReference type="FunFam" id="4.10.860.10:FF:000001">
    <property type="entry name" value="Eukaryotic translation initiation factor 3 subunit A"/>
    <property type="match status" value="1"/>
</dbReference>
<dbReference type="Gene3D" id="1.25.40.860">
    <property type="match status" value="2"/>
</dbReference>
<dbReference type="Gene3D" id="4.10.860.10">
    <property type="entry name" value="UVR domain"/>
    <property type="match status" value="1"/>
</dbReference>
<dbReference type="HAMAP" id="MF_03000">
    <property type="entry name" value="eIF3a"/>
    <property type="match status" value="1"/>
</dbReference>
<dbReference type="InterPro" id="IPR027512">
    <property type="entry name" value="EIF3A"/>
</dbReference>
<dbReference type="InterPro" id="IPR054711">
    <property type="entry name" value="eIF3a_PCI_TPR-like"/>
</dbReference>
<dbReference type="InterPro" id="IPR000717">
    <property type="entry name" value="PCI_dom"/>
</dbReference>
<dbReference type="PANTHER" id="PTHR14005:SF0">
    <property type="entry name" value="EUKARYOTIC TRANSLATION INITIATION FACTOR 3 SUBUNIT A"/>
    <property type="match status" value="1"/>
</dbReference>
<dbReference type="PANTHER" id="PTHR14005">
    <property type="entry name" value="EUKARYOTIC TRANSLATION INITIATION FACTOR 3, THETA SUBUNIT"/>
    <property type="match status" value="1"/>
</dbReference>
<dbReference type="Pfam" id="PF22591">
    <property type="entry name" value="eIF3a_PCI_TPR-like"/>
    <property type="match status" value="1"/>
</dbReference>
<dbReference type="Pfam" id="PF01399">
    <property type="entry name" value="PCI"/>
    <property type="match status" value="1"/>
</dbReference>
<dbReference type="PROSITE" id="PS50250">
    <property type="entry name" value="PCI"/>
    <property type="match status" value="1"/>
</dbReference>
<proteinExistence type="inferred from homology"/>
<organism>
    <name type="scientific">Drosophila grimshawi</name>
    <name type="common">Hawaiian fruit fly</name>
    <name type="synonym">Idiomyia grimshawi</name>
    <dbReference type="NCBI Taxonomy" id="7222"/>
    <lineage>
        <taxon>Eukaryota</taxon>
        <taxon>Metazoa</taxon>
        <taxon>Ecdysozoa</taxon>
        <taxon>Arthropoda</taxon>
        <taxon>Hexapoda</taxon>
        <taxon>Insecta</taxon>
        <taxon>Pterygota</taxon>
        <taxon>Neoptera</taxon>
        <taxon>Endopterygota</taxon>
        <taxon>Diptera</taxon>
        <taxon>Brachycera</taxon>
        <taxon>Muscomorpha</taxon>
        <taxon>Ephydroidea</taxon>
        <taxon>Drosophilidae</taxon>
        <taxon>Drosophila</taxon>
        <taxon>Hawaiian Drosophila</taxon>
    </lineage>
</organism>
<accession>B4K250</accession>
<comment type="function">
    <text evidence="1">RNA-binding component of the eukaryotic translation initiation factor 3 (eIF-3) complex, which is involved in protein synthesis of a specialized repertoire of mRNAs and, together with other initiation factors, stimulates binding of mRNA and methionyl-tRNAi to the 40S ribosome. The eIF-3 complex specifically targets and initiates translation of a subset of mRNAs involved in cell proliferation.</text>
</comment>
<comment type="subunit">
    <text evidence="1">Component of the eukaryotic translation initiation factor 3 (eIF-3) complex. The eIF-3 complex interacts with pix.</text>
</comment>
<comment type="subcellular location">
    <subcellularLocation>
        <location evidence="1">Cytoplasm</location>
    </subcellularLocation>
</comment>
<comment type="similarity">
    <text evidence="1">Belongs to the eIF-3 subunit A family.</text>
</comment>
<feature type="chain" id="PRO_0000366336" description="Eukaryotic translation initiation factor 3 subunit A">
    <location>
        <begin position="1"/>
        <end position="893"/>
    </location>
</feature>
<feature type="domain" description="PCI" evidence="2">
    <location>
        <begin position="319"/>
        <end position="502"/>
    </location>
</feature>
<feature type="region of interest" description="Disordered" evidence="3">
    <location>
        <begin position="592"/>
        <end position="634"/>
    </location>
</feature>
<feature type="region of interest" description="Disordered" evidence="3">
    <location>
        <begin position="837"/>
        <end position="893"/>
    </location>
</feature>
<feature type="coiled-coil region" evidence="1">
    <location>
        <begin position="576"/>
        <end position="707"/>
    </location>
</feature>
<feature type="coiled-coil region" evidence="1">
    <location>
        <begin position="784"/>
        <end position="881"/>
    </location>
</feature>
<feature type="compositionally biased region" description="Basic and acidic residues" evidence="3">
    <location>
        <begin position="837"/>
        <end position="881"/>
    </location>
</feature>
<reference key="1">
    <citation type="journal article" date="2007" name="Nature">
        <title>Evolution of genes and genomes on the Drosophila phylogeny.</title>
        <authorList>
            <consortium name="Drosophila 12 genomes consortium"/>
        </authorList>
    </citation>
    <scope>NUCLEOTIDE SEQUENCE [LARGE SCALE GENOMIC DNA]</scope>
    <source>
        <strain>Tucson 15287-2541.00</strain>
    </source>
</reference>
<protein>
    <recommendedName>
        <fullName evidence="1">Eukaryotic translation initiation factor 3 subunit A</fullName>
        <shortName evidence="1">eIF3a</shortName>
    </recommendedName>
    <alternativeName>
        <fullName evidence="1">Eukaryotic translation initiation factor 3 subunit 10</fullName>
    </alternativeName>
</protein>
<sequence>MARYTQRPENALKRANEFIEVGKPLRALDTLQEVFRNKRWNYTYSETVIEPLMFKYLYLCVELKKSHIAKEGLFQYRNMFQLVNVNSLENVIRGYLKMAEEHTEAAQAQSSAAVAVLELDDLDNIATPESILMSAVCGEDAQDRSDRTILLPWVKFLWESYCQCLELLRVNTHCEALYHDIARMAFQFCLKYNRKSEFRRLCDKLRKHLEDICKSNNQTTGVSITKPETQQLCLDTRLYLLDSAIQMELWQEAYKAIEDIHGLMAMSKKTPVPKTMANYYQKLAMVFSKAGNQLFHAAALLKLFQLTRELKKNLTKEDLQRMAAHVLLATLSIPLPSAHPEFDRFIEADKSPLEKAQKLAVLLGLPQPPTRVSLIRDVVRLNVPNLVSDEFRNLYNWLEVDFNPLNLCKRIQSIVDTIESTEKENTLLTPYIQSLKDVTIMRLIRQISQVYESIEFKRLLELAPFCNIFELEKLLVESVRHNDMQIRIDHQRNSIFFGTDLTESQREYRPDGPALQSMPSEQIRSQLVNMSTVLTRAVSVVYPNRERDQRAKLRTQMVQHYHEIKDREHQRILQRQKIIEDRKEFIEKQNNARELEEARRHEDESRKAKQAEQKRLEQEQEKRERKRHENEIQAIKEKSLKEKVQQISQTAHGKKMLSKLDEEGIKKLDAEQIAMRESEELQRERKELQSKIKSQEKKIDYFERAKRLEEIPLFEKYLAEKNVKDKEFWESTEQTRIELDIAERKDAVAQQARLQRMYPDRDEYLNALKKERASLYVEKLKKFEIALAEERKKRLADRIVRRREERRQAYLRAKEEERFRKEEEIRHAREAEERAAAEARRLEREAEDEKRRQQYEKQRAKEEEAERKIQEDRDRLAREVAVEPSTCFSRRRQ</sequence>
<keyword id="KW-0175">Coiled coil</keyword>
<keyword id="KW-0963">Cytoplasm</keyword>
<keyword id="KW-0396">Initiation factor</keyword>
<keyword id="KW-0648">Protein biosynthesis</keyword>
<keyword id="KW-1185">Reference proteome</keyword>
<keyword id="KW-0694">RNA-binding</keyword>
<evidence type="ECO:0000255" key="1">
    <source>
        <dbReference type="HAMAP-Rule" id="MF_03000"/>
    </source>
</evidence>
<evidence type="ECO:0000255" key="2">
    <source>
        <dbReference type="PROSITE-ProRule" id="PRU01185"/>
    </source>
</evidence>
<evidence type="ECO:0000256" key="3">
    <source>
        <dbReference type="SAM" id="MobiDB-lite"/>
    </source>
</evidence>